<reference key="1">
    <citation type="journal article" date="1990" name="Curr. Top. Microbiol. Immunol.">
        <title>Analysis of the protein-coding content of the sequence of human cytomegalovirus strain AD169.</title>
        <authorList>
            <person name="Chee M.S."/>
            <person name="Bankier A.T."/>
            <person name="Beck S."/>
            <person name="Bohni R."/>
            <person name="Brown C.M."/>
            <person name="Cerny R."/>
            <person name="Horsnell T."/>
            <person name="Hutchison C.A. III"/>
            <person name="Kouzarides T."/>
            <person name="Martignetti J.A."/>
            <person name="Preddie E."/>
            <person name="Satchwell S.C."/>
            <person name="Tomlinson P."/>
            <person name="Weston K.M."/>
            <person name="Barrell B.G."/>
        </authorList>
    </citation>
    <scope>NUCLEOTIDE SEQUENCE [LARGE SCALE GENOMIC DNA]</scope>
</reference>
<reference key="2">
    <citation type="journal article" date="1995" name="J. Virol.">
        <title>Human cytomegalovirus UL102 gene.</title>
        <authorList>
            <person name="Smith J.A."/>
            <person name="Pari G.S."/>
        </authorList>
    </citation>
    <scope>NUCLEOTIDE SEQUENCE [MRNA]</scope>
    <scope>SEQUENCE REVISION</scope>
</reference>
<reference key="3">
    <citation type="journal article" date="2003" name="J. Gen. Virol.">
        <title>The human cytomegalovirus genome revisited: comparison with the chimpanzee cytomegalovirus genome.</title>
        <authorList>
            <person name="Davison A.J."/>
            <person name="Dolan A."/>
            <person name="Akter P."/>
            <person name="Addison C."/>
            <person name="Dargan D.J."/>
            <person name="Alcendor D.J."/>
            <person name="McGeoch D.J."/>
            <person name="Hayward G.S."/>
        </authorList>
    </citation>
    <scope>GENOME REANNOTATION</scope>
</reference>
<reference key="4">
    <citation type="journal article" date="2003" name="J. Gen. Virol.">
        <authorList>
            <person name="Davison A.J."/>
            <person name="Dolan A."/>
            <person name="Akter P."/>
            <person name="Addison C."/>
            <person name="Dargan D.J."/>
            <person name="Alcendor D.J."/>
            <person name="McGeoch D.J."/>
            <person name="Hayward G.S."/>
        </authorList>
    </citation>
    <scope>ERRATUM OF PUBMED:12533697</scope>
</reference>
<protein>
    <recommendedName>
        <fullName evidence="1">DNA helicase/primase complex-associated protein</fullName>
        <shortName evidence="1">HEPA</shortName>
    </recommendedName>
    <alternativeName>
        <fullName evidence="1">Primase-associated factor</fullName>
    </alternativeName>
</protein>
<accession>P16827</accession>
<accession>Q68286</accession>
<accession>Q7M6F6</accession>
<keyword id="KW-0235">DNA replication</keyword>
<keyword id="KW-1048">Host nucleus</keyword>
<keyword id="KW-1185">Reference proteome</keyword>
<gene>
    <name type="primary">UL102</name>
</gene>
<proteinExistence type="evidence at transcript level"/>
<evidence type="ECO:0000255" key="1">
    <source>
        <dbReference type="HAMAP-Rule" id="MF_04010"/>
    </source>
</evidence>
<evidence type="ECO:0000256" key="2">
    <source>
        <dbReference type="SAM" id="MobiDB-lite"/>
    </source>
</evidence>
<evidence type="ECO:0000305" key="3"/>
<sequence>MTAQPPLHHRHHPYTLFGTSCHLSWYGLLEASVPIVQCLFLDLGGGRAEPRLHTFVVRGDRLPPAEVRAVHRASYAALASAVTTDADERRRGLEQRSAVLARVLLEGSALIRVLARTFTPVQIQTDASGVEILEAAPALGVETAALSNALSLFHVAKLVVIGSYPEVHEPRVVTHTAERVSEEYGTHAHKKLRRGYYAYDLAMSFRVGTHKYVLERDDEAVLARLFEVREVCFLRTCLRLVTPVGFVAVAVTDEQCCLLLQSAWTHLYDVLFRGFAGQPPLRDYLGPDLFETGAARSFFFPGFPPVPVYAVHGLHTLMRETALDAAAEVLSWCGLPDIVGSAGKLEVEPCALSLGVPEDEWQVFGTEAGGGAVRLNATAFRERPAGGDRRWLLPPLPRDDGDGENNVVEVSSSTGGAHPPSDDATFTVHVRDATLHRVLIVDLVERVLAKCVRARDFNPYVRYSHRLHTYAVCEKFIENLRFRSRRAFWQIQSLLGYISEHVTSACASAGLLWVLSRGHREFYVYDGYSGHGPVSAEVCVRTVVDCYWRKLFGGDDPGPTCRVQESAPGVLLVWGDERLVGPFNFFYGNGGAGGSPLHGVVGGFAAGHCGGACCAGCVVTHRHSSGGGGSGVGDADHASGGGLDAAAGSGHNGGSDRVSPSTPPAALGGCCCAAGGDWLSAVGHVLGRLPALLRERVSVSELEAVYREILFRFVARRNDVDFWLLRFQPGENEVRPHAGVIDCAPFHGVWAEQGQIIVQSRDTALAADIGYGVYVDKAFAMLTACVEVWARELLSSSTASTTACSSSSVLSSALPSVTSSSSGTATVSPPSCSSSSATWLEERDEWVRSLAVDAQHAAKRVASEGLRFFRLNA</sequence>
<comment type="function">
    <text evidence="1">Component of the helicase/primase complex. Unwinds the DNA at the replication forks and generates single-stranded DNA for both leading and lagging strand synthesis. The primase synthesizes short RNA primers on the lagging strand that the polymerase presumably elongates using dNTPs. The primase-associated factor has no known catalytic activity in the complex and may serve to facilitate the formation of the replisome by directly interacting with the origin-binding protein and the polymerase.</text>
</comment>
<comment type="subunit">
    <text evidence="1">Associates with the primase and the helicase to form the helicase-primase complex. Interacts with the origin-binding protein. Interacts with the polymerase catalytic subunit.</text>
</comment>
<comment type="subcellular location">
    <subcellularLocation>
        <location evidence="1">Host nucleus</location>
    </subcellularLocation>
</comment>
<comment type="similarity">
    <text evidence="1">Belongs to the herpesviridae HEPA family.</text>
</comment>
<name>HEPA_HCMVA</name>
<organismHost>
    <name type="scientific">Homo sapiens</name>
    <name type="common">Human</name>
    <dbReference type="NCBI Taxonomy" id="9606"/>
</organismHost>
<feature type="chain" id="PRO_0000115865" description="DNA helicase/primase complex-associated protein">
    <location>
        <begin position="1"/>
        <end position="873"/>
    </location>
</feature>
<feature type="region of interest" description="Disordered" evidence="2">
    <location>
        <begin position="394"/>
        <end position="422"/>
    </location>
</feature>
<feature type="sequence conflict" description="In Ref. 2; AAA67889." evidence="3" ref="2">
    <original>T</original>
    <variation>A</variation>
    <location>
        <position position="15"/>
    </location>
</feature>
<feature type="sequence conflict" description="In Ref. 2; AAA67889." evidence="3" ref="2">
    <original>S</original>
    <variation>T</variation>
    <location>
        <position position="74"/>
    </location>
</feature>
<feature type="sequence conflict" description="In Ref. 2; AAA67889." evidence="3" ref="2">
    <original>P</original>
    <variation>S</variation>
    <location>
        <position position="170"/>
    </location>
</feature>
<feature type="sequence conflict" description="In Ref. 2; AAA67889." evidence="3" ref="2">
    <original>T</original>
    <variation>A</variation>
    <location>
        <position position="176"/>
    </location>
</feature>
<feature type="sequence conflict" description="In Ref. 2; AAA67889." evidence="3" ref="2">
    <original>G</original>
    <variation>S</variation>
    <location>
        <position position="387"/>
    </location>
</feature>
<feature type="sequence conflict" description="In Ref. 2; AAA67889." evidence="3" ref="2">
    <original>PLPRDDGDGENNVVEVSS</original>
    <variation>RCRVTTATVKTTSWKSAR</variation>
    <location>
        <begin position="395"/>
        <end position="412"/>
    </location>
</feature>
<feature type="sequence conflict" description="In Ref. 2; AAA67889." evidence="3" ref="2">
    <original>S</original>
    <variation>G</variation>
    <location>
        <position position="493"/>
    </location>
</feature>
<feature type="sequence conflict" description="In Ref. 2; AAA67889." evidence="3" ref="2">
    <original>Y</original>
    <variation>C</variation>
    <location>
        <position position="525"/>
    </location>
</feature>
<feature type="sequence conflict" description="In Ref. 2; AAA67889." evidence="3" ref="2">
    <original>S</original>
    <variation>G</variation>
    <location>
        <position position="625"/>
    </location>
</feature>
<feature type="sequence conflict" description="In Ref. 2; AAA67889." evidence="3" ref="2">
    <original>K</original>
    <variation>R</variation>
    <location>
        <position position="859"/>
    </location>
</feature>
<dbReference type="EMBL" id="X17403">
    <property type="protein sequence ID" value="CAA35338.1"/>
    <property type="status" value="ALT_SEQ"/>
    <property type="molecule type" value="Genomic_DNA"/>
</dbReference>
<dbReference type="EMBL" id="U18289">
    <property type="protein sequence ID" value="AAA67889.1"/>
    <property type="molecule type" value="mRNA"/>
</dbReference>
<dbReference type="EMBL" id="BK000394">
    <property type="protein sequence ID" value="DAA00236.1"/>
    <property type="molecule type" value="Genomic_DNA"/>
</dbReference>
<dbReference type="PIR" id="S09867">
    <property type="entry name" value="S09867"/>
</dbReference>
<dbReference type="MINT" id="P16827"/>
<dbReference type="Proteomes" id="UP000008991">
    <property type="component" value="Segment"/>
</dbReference>
<dbReference type="Proteomes" id="UP000008992">
    <property type="component" value="Segment"/>
</dbReference>
<dbReference type="GO" id="GO:0042025">
    <property type="term" value="C:host cell nucleus"/>
    <property type="evidence" value="ECO:0007669"/>
    <property type="project" value="UniProtKB-SubCell"/>
</dbReference>
<dbReference type="GO" id="GO:0039686">
    <property type="term" value="P:bidirectional double-stranded viral DNA replication"/>
    <property type="evidence" value="ECO:0000314"/>
    <property type="project" value="UniProtKB"/>
</dbReference>
<dbReference type="GO" id="GO:0006260">
    <property type="term" value="P:DNA replication"/>
    <property type="evidence" value="ECO:0007669"/>
    <property type="project" value="UniProtKB-KW"/>
</dbReference>
<dbReference type="HAMAP" id="MF_04010">
    <property type="entry name" value="HSV_HEPA"/>
    <property type="match status" value="1"/>
</dbReference>
<dbReference type="InterPro" id="IPR004996">
    <property type="entry name" value="HSV_HEPA"/>
</dbReference>
<dbReference type="Pfam" id="PF03324">
    <property type="entry name" value="Herpes_HEPA"/>
    <property type="match status" value="1"/>
</dbReference>
<organism>
    <name type="scientific">Human cytomegalovirus (strain AD169)</name>
    <name type="common">HHV-5</name>
    <name type="synonym">Human herpesvirus 5</name>
    <dbReference type="NCBI Taxonomy" id="10360"/>
    <lineage>
        <taxon>Viruses</taxon>
        <taxon>Duplodnaviria</taxon>
        <taxon>Heunggongvirae</taxon>
        <taxon>Peploviricota</taxon>
        <taxon>Herviviricetes</taxon>
        <taxon>Herpesvirales</taxon>
        <taxon>Orthoherpesviridae</taxon>
        <taxon>Betaherpesvirinae</taxon>
        <taxon>Cytomegalovirus</taxon>
        <taxon>Cytomegalovirus humanbeta5</taxon>
        <taxon>Human cytomegalovirus</taxon>
    </lineage>
</organism>